<dbReference type="EMBL" id="CR555306">
    <property type="protein sequence ID" value="CAI08434.1"/>
    <property type="molecule type" value="Genomic_DNA"/>
</dbReference>
<dbReference type="RefSeq" id="WP_011238121.1">
    <property type="nucleotide sequence ID" value="NC_006513.1"/>
</dbReference>
<dbReference type="SMR" id="Q5P2N0"/>
<dbReference type="STRING" id="76114.ebA4067"/>
<dbReference type="KEGG" id="eba:ebA4067"/>
<dbReference type="eggNOG" id="COG0239">
    <property type="taxonomic scope" value="Bacteria"/>
</dbReference>
<dbReference type="HOGENOM" id="CLU_114342_3_3_4"/>
<dbReference type="OrthoDB" id="9806299at2"/>
<dbReference type="Proteomes" id="UP000006552">
    <property type="component" value="Chromosome"/>
</dbReference>
<dbReference type="GO" id="GO:0005886">
    <property type="term" value="C:plasma membrane"/>
    <property type="evidence" value="ECO:0007669"/>
    <property type="project" value="UniProtKB-SubCell"/>
</dbReference>
<dbReference type="GO" id="GO:0062054">
    <property type="term" value="F:fluoride channel activity"/>
    <property type="evidence" value="ECO:0007669"/>
    <property type="project" value="UniProtKB-UniRule"/>
</dbReference>
<dbReference type="GO" id="GO:0046872">
    <property type="term" value="F:metal ion binding"/>
    <property type="evidence" value="ECO:0007669"/>
    <property type="project" value="UniProtKB-KW"/>
</dbReference>
<dbReference type="GO" id="GO:0140114">
    <property type="term" value="P:cellular detoxification of fluoride"/>
    <property type="evidence" value="ECO:0007669"/>
    <property type="project" value="UniProtKB-UniRule"/>
</dbReference>
<dbReference type="HAMAP" id="MF_00454">
    <property type="entry name" value="FluC"/>
    <property type="match status" value="1"/>
</dbReference>
<dbReference type="InterPro" id="IPR003691">
    <property type="entry name" value="FluC"/>
</dbReference>
<dbReference type="NCBIfam" id="TIGR00494">
    <property type="entry name" value="crcB"/>
    <property type="match status" value="1"/>
</dbReference>
<dbReference type="NCBIfam" id="NF010792">
    <property type="entry name" value="PRK14196.1"/>
    <property type="match status" value="1"/>
</dbReference>
<dbReference type="PANTHER" id="PTHR28259">
    <property type="entry name" value="FLUORIDE EXPORT PROTEIN 1-RELATED"/>
    <property type="match status" value="1"/>
</dbReference>
<dbReference type="PANTHER" id="PTHR28259:SF1">
    <property type="entry name" value="FLUORIDE EXPORT PROTEIN 1-RELATED"/>
    <property type="match status" value="1"/>
</dbReference>
<dbReference type="Pfam" id="PF02537">
    <property type="entry name" value="CRCB"/>
    <property type="match status" value="1"/>
</dbReference>
<accession>Q5P2N0</accession>
<feature type="chain" id="PRO_0000110038" description="Fluoride-specific ion channel FluC">
    <location>
        <begin position="1"/>
        <end position="131"/>
    </location>
</feature>
<feature type="transmembrane region" description="Helical" evidence="1">
    <location>
        <begin position="3"/>
        <end position="23"/>
    </location>
</feature>
<feature type="transmembrane region" description="Helical" evidence="1">
    <location>
        <begin position="34"/>
        <end position="54"/>
    </location>
</feature>
<feature type="transmembrane region" description="Helical" evidence="1">
    <location>
        <begin position="62"/>
        <end position="82"/>
    </location>
</feature>
<feature type="transmembrane region" description="Helical" evidence="1">
    <location>
        <begin position="101"/>
        <end position="121"/>
    </location>
</feature>
<feature type="binding site" evidence="1">
    <location>
        <position position="80"/>
    </location>
    <ligand>
        <name>Na(+)</name>
        <dbReference type="ChEBI" id="CHEBI:29101"/>
        <note>structural</note>
    </ligand>
</feature>
<feature type="binding site" evidence="1">
    <location>
        <position position="83"/>
    </location>
    <ligand>
        <name>Na(+)</name>
        <dbReference type="ChEBI" id="CHEBI:29101"/>
        <note>structural</note>
    </ligand>
</feature>
<protein>
    <recommendedName>
        <fullName evidence="1">Fluoride-specific ion channel FluC</fullName>
    </recommendedName>
</protein>
<organism>
    <name type="scientific">Aromatoleum aromaticum (strain DSM 19018 / LMG 30748 / EbN1)</name>
    <name type="common">Azoarcus sp. (strain EbN1)</name>
    <dbReference type="NCBI Taxonomy" id="76114"/>
    <lineage>
        <taxon>Bacteria</taxon>
        <taxon>Pseudomonadati</taxon>
        <taxon>Pseudomonadota</taxon>
        <taxon>Betaproteobacteria</taxon>
        <taxon>Rhodocyclales</taxon>
        <taxon>Rhodocyclaceae</taxon>
        <taxon>Aromatoleum</taxon>
    </lineage>
</organism>
<proteinExistence type="inferred from homology"/>
<gene>
    <name evidence="1" type="primary">fluC</name>
    <name evidence="1" type="synonym">crcB</name>
    <name type="ordered locus">AZOSEA23090</name>
    <name type="ORF">ebA4067</name>
</gene>
<reference key="1">
    <citation type="journal article" date="2005" name="Arch. Microbiol.">
        <title>The genome sequence of an anaerobic aromatic-degrading denitrifying bacterium, strain EbN1.</title>
        <authorList>
            <person name="Rabus R."/>
            <person name="Kube M."/>
            <person name="Heider J."/>
            <person name="Beck A."/>
            <person name="Heitmann K."/>
            <person name="Widdel F."/>
            <person name="Reinhardt R."/>
        </authorList>
    </citation>
    <scope>NUCLEOTIDE SEQUENCE [LARGE SCALE GENOMIC DNA]</scope>
    <source>
        <strain>DSM 19018 / LMG 30748 / EbN1</strain>
    </source>
</reference>
<sequence>MAAAANLPAFLAVGAGAALGAWLRWALGLLLNPIFLTIPFGTLAANLLGGLLMGASLAWIHAVPAMSPVLKLLLTTGFLGGLTTFSTFSAEGLHLVQRGEWGWLALHAAVHVAGSLLMAWIGYAAFTAWRG</sequence>
<evidence type="ECO:0000255" key="1">
    <source>
        <dbReference type="HAMAP-Rule" id="MF_00454"/>
    </source>
</evidence>
<comment type="function">
    <text evidence="1">Fluoride-specific ion channel. Important for reducing fluoride concentration in the cell, thus reducing its toxicity.</text>
</comment>
<comment type="catalytic activity">
    <reaction evidence="1">
        <text>fluoride(in) = fluoride(out)</text>
        <dbReference type="Rhea" id="RHEA:76159"/>
        <dbReference type="ChEBI" id="CHEBI:17051"/>
    </reaction>
    <physiologicalReaction direction="left-to-right" evidence="1">
        <dbReference type="Rhea" id="RHEA:76160"/>
    </physiologicalReaction>
</comment>
<comment type="activity regulation">
    <text evidence="1">Na(+) is not transported, but it plays an essential structural role and its presence is essential for fluoride channel function.</text>
</comment>
<comment type="subcellular location">
    <subcellularLocation>
        <location evidence="1">Cell inner membrane</location>
        <topology evidence="1">Multi-pass membrane protein</topology>
    </subcellularLocation>
</comment>
<comment type="similarity">
    <text evidence="1">Belongs to the fluoride channel Fluc/FEX (TC 1.A.43) family.</text>
</comment>
<keyword id="KW-0997">Cell inner membrane</keyword>
<keyword id="KW-1003">Cell membrane</keyword>
<keyword id="KW-0407">Ion channel</keyword>
<keyword id="KW-0406">Ion transport</keyword>
<keyword id="KW-0472">Membrane</keyword>
<keyword id="KW-0479">Metal-binding</keyword>
<keyword id="KW-1185">Reference proteome</keyword>
<keyword id="KW-0915">Sodium</keyword>
<keyword id="KW-0812">Transmembrane</keyword>
<keyword id="KW-1133">Transmembrane helix</keyword>
<keyword id="KW-0813">Transport</keyword>
<name>FLUC_AROAE</name>